<dbReference type="PIR" id="A93131">
    <property type="entry name" value="MHDG"/>
</dbReference>
<dbReference type="FunCoup" id="P01874">
    <property type="interactions" value="11"/>
</dbReference>
<dbReference type="STRING" id="9615.ENSCAFP00000027249"/>
<dbReference type="InParanoid" id="P01874"/>
<dbReference type="Proteomes" id="UP000002254">
    <property type="component" value="Unplaced"/>
</dbReference>
<dbReference type="Proteomes" id="UP000694429">
    <property type="component" value="Unplaced"/>
</dbReference>
<dbReference type="Proteomes" id="UP000694542">
    <property type="component" value="Unplaced"/>
</dbReference>
<dbReference type="Proteomes" id="UP000805418">
    <property type="component" value="Unplaced"/>
</dbReference>
<dbReference type="GO" id="GO:0042571">
    <property type="term" value="C:immunoglobulin complex, circulating"/>
    <property type="evidence" value="ECO:0000318"/>
    <property type="project" value="GO_Central"/>
</dbReference>
<dbReference type="GO" id="GO:0003823">
    <property type="term" value="F:antigen binding"/>
    <property type="evidence" value="ECO:0000318"/>
    <property type="project" value="GO_Central"/>
</dbReference>
<dbReference type="GO" id="GO:0034987">
    <property type="term" value="F:immunoglobulin receptor binding"/>
    <property type="evidence" value="ECO:0000318"/>
    <property type="project" value="GO_Central"/>
</dbReference>
<dbReference type="GO" id="GO:0019731">
    <property type="term" value="P:antibacterial humoral response"/>
    <property type="evidence" value="ECO:0000318"/>
    <property type="project" value="GO_Central"/>
</dbReference>
<dbReference type="GO" id="GO:0006958">
    <property type="term" value="P:complement activation, classical pathway"/>
    <property type="evidence" value="ECO:0000318"/>
    <property type="project" value="GO_Central"/>
</dbReference>
<dbReference type="CDD" id="cd07696">
    <property type="entry name" value="IgC1_CH3_IgAEM_CH2_IgG"/>
    <property type="match status" value="1"/>
</dbReference>
<dbReference type="CDD" id="cd05768">
    <property type="entry name" value="IgC1_CH3_IgAGD_CH4_IgAEM"/>
    <property type="match status" value="1"/>
</dbReference>
<dbReference type="FunFam" id="2.60.40.10:FF:000998">
    <property type="entry name" value="Immunoglobulin heavy constant epsilon"/>
    <property type="match status" value="1"/>
</dbReference>
<dbReference type="FunFam" id="2.60.40.10:FF:000463">
    <property type="entry name" value="Immunoglobulin heavy constant gamma 1"/>
    <property type="match status" value="1"/>
</dbReference>
<dbReference type="FunFam" id="2.60.40.10:FF:001836">
    <property type="entry name" value="Immunoglobulin heavy constant mu"/>
    <property type="match status" value="1"/>
</dbReference>
<dbReference type="Gene3D" id="2.60.40.10">
    <property type="entry name" value="Immunoglobulins"/>
    <property type="match status" value="4"/>
</dbReference>
<dbReference type="InterPro" id="IPR007110">
    <property type="entry name" value="Ig-like_dom"/>
</dbReference>
<dbReference type="InterPro" id="IPR036179">
    <property type="entry name" value="Ig-like_dom_sf"/>
</dbReference>
<dbReference type="InterPro" id="IPR013783">
    <property type="entry name" value="Ig-like_fold"/>
</dbReference>
<dbReference type="InterPro" id="IPR003006">
    <property type="entry name" value="Ig/MHC_CS"/>
</dbReference>
<dbReference type="InterPro" id="IPR003597">
    <property type="entry name" value="Ig_C1-set"/>
</dbReference>
<dbReference type="InterPro" id="IPR050380">
    <property type="entry name" value="Immune_Resp_Modulators"/>
</dbReference>
<dbReference type="PANTHER" id="PTHR23411">
    <property type="entry name" value="TAPASIN"/>
    <property type="match status" value="1"/>
</dbReference>
<dbReference type="Pfam" id="PF07654">
    <property type="entry name" value="C1-set"/>
    <property type="match status" value="4"/>
</dbReference>
<dbReference type="SMART" id="SM00407">
    <property type="entry name" value="IGc1"/>
    <property type="match status" value="4"/>
</dbReference>
<dbReference type="SUPFAM" id="SSF48726">
    <property type="entry name" value="Immunoglobulin"/>
    <property type="match status" value="4"/>
</dbReference>
<dbReference type="PROSITE" id="PS50835">
    <property type="entry name" value="IG_LIKE"/>
    <property type="match status" value="4"/>
</dbReference>
<dbReference type="PROSITE" id="PS00290">
    <property type="entry name" value="IG_MHC"/>
    <property type="match status" value="3"/>
</dbReference>
<name>IGHM_CANLF</name>
<organism>
    <name type="scientific">Canis lupus familiaris</name>
    <name type="common">Dog</name>
    <name type="synonym">Canis familiaris</name>
    <dbReference type="NCBI Taxonomy" id="9615"/>
    <lineage>
        <taxon>Eukaryota</taxon>
        <taxon>Metazoa</taxon>
        <taxon>Chordata</taxon>
        <taxon>Craniata</taxon>
        <taxon>Vertebrata</taxon>
        <taxon>Euteleostomi</taxon>
        <taxon>Mammalia</taxon>
        <taxon>Eutheria</taxon>
        <taxon>Laurasiatheria</taxon>
        <taxon>Carnivora</taxon>
        <taxon>Caniformia</taxon>
        <taxon>Canidae</taxon>
        <taxon>Canis</taxon>
    </lineage>
</organism>
<feature type="chain" id="PRO_0000153617" description="Ig mu chain C region">
    <location>
        <begin position="1" status="less than"/>
        <end position="450"/>
    </location>
</feature>
<feature type="non-terminal residue">
    <location>
        <position position="1"/>
    </location>
</feature>
<protein>
    <recommendedName>
        <fullName>Ig mu chain C region</fullName>
    </recommendedName>
</protein>
<sequence>GSASAPSIFPLVSCENSNPTSTVAMGCLARDFLPGSITFSWKYEBLSAINSTRGFPSVLRGGKYVATSQVFLPSVDIIQGTDEHIVCKVRHSBGBKQKBVPLPVMLTLPPEVSGFIPPRDAFFGBPRKSQLICQASGFSPRQVWSLRDGKQIESGVTTNEVZAZAKZSGPTTYKVTSMLTIQEDAWLSQSVFTCKVEHRGLTFQQNASSMCTSDQPVGISIFTIPPSFASIFNTKSAKLSCLVTDLATYDSVTISWTREENGALKTHTNISESHPNGTFSAMGEATVCVEEWESGEQFTCTVTHTDLPSVLKQTISRPKGVAVHMPSVYVLPPSREQLDLRESATLSCLVTGYSPPDVFVQWVQKGQPVPPDSYVTSAPMPEPQAPGLYFAHSILTVSEEEWNAGETYTCVVAHESLPNRVTERSVDKSTGKPTLYNVSLVLSDTAGZCY</sequence>
<keyword id="KW-0903">Direct protein sequencing</keyword>
<keyword id="KW-0393">Immunoglobulin domain</keyword>
<keyword id="KW-1185">Reference proteome</keyword>
<proteinExistence type="evidence at protein level"/>
<accession>P01874</accession>
<reference key="1">
    <citation type="journal article" date="1979" name="Mol. Immunol.">
        <title>The complete amino-acid sequence of a canine mu chain.</title>
        <authorList>
            <person name="McCumber L.J."/>
            <person name="Capra J.D."/>
        </authorList>
    </citation>
    <scope>PROTEIN SEQUENCE OF 1-177 (MOO)</scope>
</reference>
<reference key="2">
    <citation type="journal article" date="1978" name="Science">
        <title>Amino acid sequence of the Fc region of a canine immunoglobulin M: interspecies homology for the IgM class.</title>
        <authorList>
            <person name="Wasserman R.L."/>
            <person name="Capra J.D."/>
        </authorList>
    </citation>
    <scope>PROTEIN SEQUENCE OF 178-450 (MOO)</scope>
</reference>